<comment type="function">
    <text evidence="1">Catalyzes the methyl esterification of L-isoaspartyl residues in peptides and proteins that result from spontaneous decomposition of normal L-aspartyl and L-asparaginyl residues. It plays a role in the repair and/or degradation of damaged proteins.</text>
</comment>
<comment type="catalytic activity">
    <reaction evidence="1">
        <text>[protein]-L-isoaspartate + S-adenosyl-L-methionine = [protein]-L-isoaspartate alpha-methyl ester + S-adenosyl-L-homocysteine</text>
        <dbReference type="Rhea" id="RHEA:12705"/>
        <dbReference type="Rhea" id="RHEA-COMP:12143"/>
        <dbReference type="Rhea" id="RHEA-COMP:12144"/>
        <dbReference type="ChEBI" id="CHEBI:57856"/>
        <dbReference type="ChEBI" id="CHEBI:59789"/>
        <dbReference type="ChEBI" id="CHEBI:90596"/>
        <dbReference type="ChEBI" id="CHEBI:90598"/>
        <dbReference type="EC" id="2.1.1.77"/>
    </reaction>
</comment>
<comment type="subcellular location">
    <subcellularLocation>
        <location evidence="1">Cytoplasm</location>
    </subcellularLocation>
</comment>
<comment type="similarity">
    <text evidence="1">Belongs to the methyltransferase superfamily. L-isoaspartyl/D-aspartyl protein methyltransferase family.</text>
</comment>
<sequence>MDIQLSGIGMTSARTRDRLVQRLRDAGIQDERVLDAIRNTPRHLFIEEALAHQAYDDTALPIGHGQTISQPWVVARMTELLIAKGKPRKVLEIGTGCGYQTAVLAPFCDELYSVERIRPLQDLARKRLLQLGLAKVQLKHADGGFGWTAEAPFDAILAACARVDIPEGLLSQLADGGRLVMPVGGDRQQVLTVVDRDGDQFRSQTLDSVRFVPFQRGVLR</sequence>
<reference key="1">
    <citation type="journal article" date="2006" name="Nat. Biotechnol.">
        <title>Genome sequence of the ubiquitous hydrocarbon-degrading marine bacterium Alcanivorax borkumensis.</title>
        <authorList>
            <person name="Schneiker S."/>
            <person name="Martins dos Santos V.A.P."/>
            <person name="Bartels D."/>
            <person name="Bekel T."/>
            <person name="Brecht M."/>
            <person name="Buhrmester J."/>
            <person name="Chernikova T.N."/>
            <person name="Denaro R."/>
            <person name="Ferrer M."/>
            <person name="Gertler C."/>
            <person name="Goesmann A."/>
            <person name="Golyshina O.V."/>
            <person name="Kaminski F."/>
            <person name="Khachane A.N."/>
            <person name="Lang S."/>
            <person name="Linke B."/>
            <person name="McHardy A.C."/>
            <person name="Meyer F."/>
            <person name="Nechitaylo T."/>
            <person name="Puehler A."/>
            <person name="Regenhardt D."/>
            <person name="Rupp O."/>
            <person name="Sabirova J.S."/>
            <person name="Selbitschka W."/>
            <person name="Yakimov M.M."/>
            <person name="Timmis K.N."/>
            <person name="Vorhoelter F.-J."/>
            <person name="Weidner S."/>
            <person name="Kaiser O."/>
            <person name="Golyshin P.N."/>
        </authorList>
    </citation>
    <scope>NUCLEOTIDE SEQUENCE [LARGE SCALE GENOMIC DNA]</scope>
    <source>
        <strain>ATCC 700651 / DSM 11573 / NCIMB 13689 / SK2</strain>
    </source>
</reference>
<dbReference type="EC" id="2.1.1.77" evidence="1"/>
<dbReference type="EMBL" id="AM286690">
    <property type="protein sequence ID" value="CAL16617.1"/>
    <property type="molecule type" value="Genomic_DNA"/>
</dbReference>
<dbReference type="RefSeq" id="WP_011588452.1">
    <property type="nucleotide sequence ID" value="NC_008260.1"/>
</dbReference>
<dbReference type="SMR" id="Q0VQD1"/>
<dbReference type="STRING" id="393595.ABO_1169"/>
<dbReference type="KEGG" id="abo:ABO_1169"/>
<dbReference type="eggNOG" id="COG2518">
    <property type="taxonomic scope" value="Bacteria"/>
</dbReference>
<dbReference type="HOGENOM" id="CLU_055432_2_0_6"/>
<dbReference type="OrthoDB" id="9810066at2"/>
<dbReference type="Proteomes" id="UP000008871">
    <property type="component" value="Chromosome"/>
</dbReference>
<dbReference type="GO" id="GO:0005737">
    <property type="term" value="C:cytoplasm"/>
    <property type="evidence" value="ECO:0007669"/>
    <property type="project" value="UniProtKB-SubCell"/>
</dbReference>
<dbReference type="GO" id="GO:0004719">
    <property type="term" value="F:protein-L-isoaspartate (D-aspartate) O-methyltransferase activity"/>
    <property type="evidence" value="ECO:0007669"/>
    <property type="project" value="UniProtKB-UniRule"/>
</dbReference>
<dbReference type="GO" id="GO:0032259">
    <property type="term" value="P:methylation"/>
    <property type="evidence" value="ECO:0007669"/>
    <property type="project" value="UniProtKB-KW"/>
</dbReference>
<dbReference type="GO" id="GO:0036211">
    <property type="term" value="P:protein modification process"/>
    <property type="evidence" value="ECO:0007669"/>
    <property type="project" value="UniProtKB-UniRule"/>
</dbReference>
<dbReference type="GO" id="GO:0030091">
    <property type="term" value="P:protein repair"/>
    <property type="evidence" value="ECO:0007669"/>
    <property type="project" value="UniProtKB-UniRule"/>
</dbReference>
<dbReference type="CDD" id="cd02440">
    <property type="entry name" value="AdoMet_MTases"/>
    <property type="match status" value="1"/>
</dbReference>
<dbReference type="FunFam" id="3.40.50.150:FF:000010">
    <property type="entry name" value="Protein-L-isoaspartate O-methyltransferase"/>
    <property type="match status" value="1"/>
</dbReference>
<dbReference type="Gene3D" id="3.40.50.150">
    <property type="entry name" value="Vaccinia Virus protein VP39"/>
    <property type="match status" value="1"/>
</dbReference>
<dbReference type="HAMAP" id="MF_00090">
    <property type="entry name" value="PIMT"/>
    <property type="match status" value="1"/>
</dbReference>
<dbReference type="InterPro" id="IPR000682">
    <property type="entry name" value="PCMT"/>
</dbReference>
<dbReference type="InterPro" id="IPR029063">
    <property type="entry name" value="SAM-dependent_MTases_sf"/>
</dbReference>
<dbReference type="NCBIfam" id="TIGR00080">
    <property type="entry name" value="pimt"/>
    <property type="match status" value="1"/>
</dbReference>
<dbReference type="NCBIfam" id="NF001453">
    <property type="entry name" value="PRK00312.1"/>
    <property type="match status" value="1"/>
</dbReference>
<dbReference type="PANTHER" id="PTHR11579">
    <property type="entry name" value="PROTEIN-L-ISOASPARTATE O-METHYLTRANSFERASE"/>
    <property type="match status" value="1"/>
</dbReference>
<dbReference type="PANTHER" id="PTHR11579:SF0">
    <property type="entry name" value="PROTEIN-L-ISOASPARTATE(D-ASPARTATE) O-METHYLTRANSFERASE"/>
    <property type="match status" value="1"/>
</dbReference>
<dbReference type="Pfam" id="PF01135">
    <property type="entry name" value="PCMT"/>
    <property type="match status" value="1"/>
</dbReference>
<dbReference type="SUPFAM" id="SSF53335">
    <property type="entry name" value="S-adenosyl-L-methionine-dependent methyltransferases"/>
    <property type="match status" value="1"/>
</dbReference>
<dbReference type="PROSITE" id="PS01279">
    <property type="entry name" value="PCMT"/>
    <property type="match status" value="1"/>
</dbReference>
<name>PIMT_ALCBS</name>
<proteinExistence type="inferred from homology"/>
<protein>
    <recommendedName>
        <fullName evidence="1">Protein-L-isoaspartate O-methyltransferase</fullName>
        <ecNumber evidence="1">2.1.1.77</ecNumber>
    </recommendedName>
    <alternativeName>
        <fullName evidence="1">L-isoaspartyl protein carboxyl methyltransferase</fullName>
    </alternativeName>
    <alternativeName>
        <fullName evidence="1">Protein L-isoaspartyl methyltransferase</fullName>
    </alternativeName>
    <alternativeName>
        <fullName evidence="1">Protein-beta-aspartate methyltransferase</fullName>
        <shortName evidence="1">PIMT</shortName>
    </alternativeName>
</protein>
<keyword id="KW-0963">Cytoplasm</keyword>
<keyword id="KW-0489">Methyltransferase</keyword>
<keyword id="KW-1185">Reference proteome</keyword>
<keyword id="KW-0949">S-adenosyl-L-methionine</keyword>
<keyword id="KW-0808">Transferase</keyword>
<evidence type="ECO:0000255" key="1">
    <source>
        <dbReference type="HAMAP-Rule" id="MF_00090"/>
    </source>
</evidence>
<accession>Q0VQD1</accession>
<gene>
    <name evidence="1" type="primary">pcm</name>
    <name type="ordered locus">ABO_1169</name>
</gene>
<organism>
    <name type="scientific">Alcanivorax borkumensis (strain ATCC 700651 / DSM 11573 / NCIMB 13689 / SK2)</name>
    <dbReference type="NCBI Taxonomy" id="393595"/>
    <lineage>
        <taxon>Bacteria</taxon>
        <taxon>Pseudomonadati</taxon>
        <taxon>Pseudomonadota</taxon>
        <taxon>Gammaproteobacteria</taxon>
        <taxon>Oceanospirillales</taxon>
        <taxon>Alcanivoracaceae</taxon>
        <taxon>Alcanivorax</taxon>
    </lineage>
</organism>
<feature type="chain" id="PRO_0000351810" description="Protein-L-isoaspartate O-methyltransferase">
    <location>
        <begin position="1"/>
        <end position="220"/>
    </location>
</feature>
<feature type="active site" evidence="1">
    <location>
        <position position="69"/>
    </location>
</feature>